<comment type="function">
    <text evidence="1">Catalyzes the attachment of serine to tRNA(Ser). Is also able to aminoacylate tRNA(Sec) with serine, to form the misacylated tRNA L-seryl-tRNA(Sec), which will be further converted into selenocysteinyl-tRNA(Sec).</text>
</comment>
<comment type="catalytic activity">
    <reaction evidence="1">
        <text>tRNA(Ser) + L-serine + ATP = L-seryl-tRNA(Ser) + AMP + diphosphate + H(+)</text>
        <dbReference type="Rhea" id="RHEA:12292"/>
        <dbReference type="Rhea" id="RHEA-COMP:9669"/>
        <dbReference type="Rhea" id="RHEA-COMP:9703"/>
        <dbReference type="ChEBI" id="CHEBI:15378"/>
        <dbReference type="ChEBI" id="CHEBI:30616"/>
        <dbReference type="ChEBI" id="CHEBI:33019"/>
        <dbReference type="ChEBI" id="CHEBI:33384"/>
        <dbReference type="ChEBI" id="CHEBI:78442"/>
        <dbReference type="ChEBI" id="CHEBI:78533"/>
        <dbReference type="ChEBI" id="CHEBI:456215"/>
        <dbReference type="EC" id="6.1.1.11"/>
    </reaction>
</comment>
<comment type="catalytic activity">
    <reaction evidence="1">
        <text>tRNA(Sec) + L-serine + ATP = L-seryl-tRNA(Sec) + AMP + diphosphate + H(+)</text>
        <dbReference type="Rhea" id="RHEA:42580"/>
        <dbReference type="Rhea" id="RHEA-COMP:9742"/>
        <dbReference type="Rhea" id="RHEA-COMP:10128"/>
        <dbReference type="ChEBI" id="CHEBI:15378"/>
        <dbReference type="ChEBI" id="CHEBI:30616"/>
        <dbReference type="ChEBI" id="CHEBI:33019"/>
        <dbReference type="ChEBI" id="CHEBI:33384"/>
        <dbReference type="ChEBI" id="CHEBI:78442"/>
        <dbReference type="ChEBI" id="CHEBI:78533"/>
        <dbReference type="ChEBI" id="CHEBI:456215"/>
        <dbReference type="EC" id="6.1.1.11"/>
    </reaction>
</comment>
<comment type="pathway">
    <text evidence="1">Aminoacyl-tRNA biosynthesis; selenocysteinyl-tRNA(Sec) biosynthesis; L-seryl-tRNA(Sec) from L-serine and tRNA(Sec): step 1/1.</text>
</comment>
<comment type="subunit">
    <text evidence="1">Homodimer. The tRNA molecule binds across the dimer.</text>
</comment>
<comment type="subcellular location">
    <subcellularLocation>
        <location evidence="1">Cytoplasm</location>
    </subcellularLocation>
</comment>
<comment type="domain">
    <text evidence="1">Consists of two distinct domains, a catalytic core and a N-terminal extension that is involved in tRNA binding.</text>
</comment>
<comment type="similarity">
    <text evidence="1">Belongs to the class-II aminoacyl-tRNA synthetase family. Type-1 seryl-tRNA synthetase subfamily.</text>
</comment>
<dbReference type="EC" id="6.1.1.11" evidence="1"/>
<dbReference type="EMBL" id="CP000705">
    <property type="protein sequence ID" value="ABQ82369.1"/>
    <property type="molecule type" value="Genomic_DNA"/>
</dbReference>
<dbReference type="RefSeq" id="WP_003669649.1">
    <property type="nucleotide sequence ID" value="NC_009513.1"/>
</dbReference>
<dbReference type="SMR" id="A5VHP5"/>
<dbReference type="STRING" id="557436.Lreu_0097"/>
<dbReference type="KEGG" id="lre:Lreu_0097"/>
<dbReference type="PATRIC" id="fig|557436.17.peg.270"/>
<dbReference type="eggNOG" id="COG0172">
    <property type="taxonomic scope" value="Bacteria"/>
</dbReference>
<dbReference type="HOGENOM" id="CLU_023797_1_1_9"/>
<dbReference type="UniPathway" id="UPA00906">
    <property type="reaction ID" value="UER00895"/>
</dbReference>
<dbReference type="Proteomes" id="UP000001991">
    <property type="component" value="Chromosome"/>
</dbReference>
<dbReference type="GO" id="GO:0005737">
    <property type="term" value="C:cytoplasm"/>
    <property type="evidence" value="ECO:0007669"/>
    <property type="project" value="UniProtKB-SubCell"/>
</dbReference>
<dbReference type="GO" id="GO:0005524">
    <property type="term" value="F:ATP binding"/>
    <property type="evidence" value="ECO:0007669"/>
    <property type="project" value="UniProtKB-UniRule"/>
</dbReference>
<dbReference type="GO" id="GO:0140096">
    <property type="term" value="F:catalytic activity, acting on a protein"/>
    <property type="evidence" value="ECO:0007669"/>
    <property type="project" value="UniProtKB-ARBA"/>
</dbReference>
<dbReference type="GO" id="GO:0004828">
    <property type="term" value="F:serine-tRNA ligase activity"/>
    <property type="evidence" value="ECO:0007669"/>
    <property type="project" value="UniProtKB-UniRule"/>
</dbReference>
<dbReference type="GO" id="GO:0016740">
    <property type="term" value="F:transferase activity"/>
    <property type="evidence" value="ECO:0007669"/>
    <property type="project" value="UniProtKB-ARBA"/>
</dbReference>
<dbReference type="GO" id="GO:0016260">
    <property type="term" value="P:selenocysteine biosynthetic process"/>
    <property type="evidence" value="ECO:0007669"/>
    <property type="project" value="UniProtKB-UniRule"/>
</dbReference>
<dbReference type="GO" id="GO:0006434">
    <property type="term" value="P:seryl-tRNA aminoacylation"/>
    <property type="evidence" value="ECO:0007669"/>
    <property type="project" value="UniProtKB-UniRule"/>
</dbReference>
<dbReference type="CDD" id="cd00770">
    <property type="entry name" value="SerRS_core"/>
    <property type="match status" value="1"/>
</dbReference>
<dbReference type="Gene3D" id="3.30.930.10">
    <property type="entry name" value="Bira Bifunctional Protein, Domain 2"/>
    <property type="match status" value="1"/>
</dbReference>
<dbReference type="Gene3D" id="1.10.287.40">
    <property type="entry name" value="Serine-tRNA synthetase, tRNA binding domain"/>
    <property type="match status" value="1"/>
</dbReference>
<dbReference type="HAMAP" id="MF_00176">
    <property type="entry name" value="Ser_tRNA_synth_type1"/>
    <property type="match status" value="1"/>
</dbReference>
<dbReference type="InterPro" id="IPR002314">
    <property type="entry name" value="aa-tRNA-synt_IIb"/>
</dbReference>
<dbReference type="InterPro" id="IPR006195">
    <property type="entry name" value="aa-tRNA-synth_II"/>
</dbReference>
<dbReference type="InterPro" id="IPR045864">
    <property type="entry name" value="aa-tRNA-synth_II/BPL/LPL"/>
</dbReference>
<dbReference type="InterPro" id="IPR002317">
    <property type="entry name" value="Ser-tRNA-ligase_type_1"/>
</dbReference>
<dbReference type="InterPro" id="IPR015866">
    <property type="entry name" value="Ser-tRNA-synth_1_N"/>
</dbReference>
<dbReference type="InterPro" id="IPR042103">
    <property type="entry name" value="SerRS_1_N_sf"/>
</dbReference>
<dbReference type="InterPro" id="IPR033729">
    <property type="entry name" value="SerRS_core"/>
</dbReference>
<dbReference type="InterPro" id="IPR010978">
    <property type="entry name" value="tRNA-bd_arm"/>
</dbReference>
<dbReference type="NCBIfam" id="TIGR00414">
    <property type="entry name" value="serS"/>
    <property type="match status" value="1"/>
</dbReference>
<dbReference type="PANTHER" id="PTHR43697:SF1">
    <property type="entry name" value="SERINE--TRNA LIGASE"/>
    <property type="match status" value="1"/>
</dbReference>
<dbReference type="PANTHER" id="PTHR43697">
    <property type="entry name" value="SERYL-TRNA SYNTHETASE"/>
    <property type="match status" value="1"/>
</dbReference>
<dbReference type="Pfam" id="PF02403">
    <property type="entry name" value="Seryl_tRNA_N"/>
    <property type="match status" value="1"/>
</dbReference>
<dbReference type="Pfam" id="PF00587">
    <property type="entry name" value="tRNA-synt_2b"/>
    <property type="match status" value="1"/>
</dbReference>
<dbReference type="PIRSF" id="PIRSF001529">
    <property type="entry name" value="Ser-tRNA-synth_IIa"/>
    <property type="match status" value="1"/>
</dbReference>
<dbReference type="PRINTS" id="PR00981">
    <property type="entry name" value="TRNASYNTHSER"/>
</dbReference>
<dbReference type="SUPFAM" id="SSF55681">
    <property type="entry name" value="Class II aaRS and biotin synthetases"/>
    <property type="match status" value="1"/>
</dbReference>
<dbReference type="SUPFAM" id="SSF46589">
    <property type="entry name" value="tRNA-binding arm"/>
    <property type="match status" value="1"/>
</dbReference>
<dbReference type="PROSITE" id="PS50862">
    <property type="entry name" value="AA_TRNA_LIGASE_II"/>
    <property type="match status" value="1"/>
</dbReference>
<feature type="chain" id="PRO_1000058354" description="Serine--tRNA ligase">
    <location>
        <begin position="1"/>
        <end position="435"/>
    </location>
</feature>
<feature type="region of interest" description="Disordered" evidence="2">
    <location>
        <begin position="48"/>
        <end position="68"/>
    </location>
</feature>
<feature type="compositionally biased region" description="Basic and acidic residues" evidence="2">
    <location>
        <begin position="49"/>
        <end position="68"/>
    </location>
</feature>
<feature type="binding site" evidence="1">
    <location>
        <begin position="230"/>
        <end position="232"/>
    </location>
    <ligand>
        <name>L-serine</name>
        <dbReference type="ChEBI" id="CHEBI:33384"/>
    </ligand>
</feature>
<feature type="binding site" evidence="1">
    <location>
        <begin position="261"/>
        <end position="263"/>
    </location>
    <ligand>
        <name>ATP</name>
        <dbReference type="ChEBI" id="CHEBI:30616"/>
    </ligand>
</feature>
<feature type="binding site" evidence="1">
    <location>
        <position position="284"/>
    </location>
    <ligand>
        <name>L-serine</name>
        <dbReference type="ChEBI" id="CHEBI:33384"/>
    </ligand>
</feature>
<feature type="binding site" evidence="1">
    <location>
        <begin position="348"/>
        <end position="351"/>
    </location>
    <ligand>
        <name>ATP</name>
        <dbReference type="ChEBI" id="CHEBI:30616"/>
    </ligand>
</feature>
<feature type="binding site" evidence="1">
    <location>
        <position position="383"/>
    </location>
    <ligand>
        <name>L-serine</name>
        <dbReference type="ChEBI" id="CHEBI:33384"/>
    </ligand>
</feature>
<reference key="1">
    <citation type="journal article" date="2011" name="PLoS Genet.">
        <title>The evolution of host specialization in the vertebrate gut symbiont Lactobacillus reuteri.</title>
        <authorList>
            <person name="Frese S.A."/>
            <person name="Benson A.K."/>
            <person name="Tannock G.W."/>
            <person name="Loach D.M."/>
            <person name="Kim J."/>
            <person name="Zhang M."/>
            <person name="Oh P.L."/>
            <person name="Heng N.C."/>
            <person name="Patil P.B."/>
            <person name="Juge N."/>
            <person name="Mackenzie D.A."/>
            <person name="Pearson B.M."/>
            <person name="Lapidus A."/>
            <person name="Dalin E."/>
            <person name="Tice H."/>
            <person name="Goltsman E."/>
            <person name="Land M."/>
            <person name="Hauser L."/>
            <person name="Ivanova N."/>
            <person name="Kyrpides N.C."/>
            <person name="Walter J."/>
        </authorList>
    </citation>
    <scope>NUCLEOTIDE SEQUENCE [LARGE SCALE GENOMIC DNA]</scope>
    <source>
        <strain>DSM 20016</strain>
    </source>
</reference>
<organism>
    <name type="scientific">Limosilactobacillus reuteri (strain DSM 20016)</name>
    <name type="common">Lactobacillus reuteri</name>
    <dbReference type="NCBI Taxonomy" id="557436"/>
    <lineage>
        <taxon>Bacteria</taxon>
        <taxon>Bacillati</taxon>
        <taxon>Bacillota</taxon>
        <taxon>Bacilli</taxon>
        <taxon>Lactobacillales</taxon>
        <taxon>Lactobacillaceae</taxon>
        <taxon>Limosilactobacillus</taxon>
    </lineage>
</organism>
<sequence>MLDIKKIRQEPDFYKEKLATRGVKPEEIDEVIALDKKRRELLQQTETMKAQRNEASKKIGEAKRNGESADAAIKETRELGDKIKELDTEVEANDAELHDKMAHLPNVPHDGVPVSLTEDGAVELRKVGKVRDFDFEPKHHWDIGENLGILDFDRAGKVSGARFVYYLGLGAQLERAVYNFMLDEHMKEGYTEVLPPYIVNADSMYGTGQFPKFKEGVYQVNGEDMTLIPTAEVPLTNYYRGEVIPTEELPVYVTALTPSFRSEAGAAGRDTRGLIRMHQFNKVEMVKYTKPENSWDELEKMTANAENILKKLNLPYHVITLTTGDMSFTASETHDLELWMPAQNKYREVSSCSNCLDFQARRMHTQYRDENGKLQYVHTLNGSGLAVGRTVAAILENYQNADGSVTIPEVLVPYMHGVTKITKENAVPFRNKVNK</sequence>
<evidence type="ECO:0000255" key="1">
    <source>
        <dbReference type="HAMAP-Rule" id="MF_00176"/>
    </source>
</evidence>
<evidence type="ECO:0000256" key="2">
    <source>
        <dbReference type="SAM" id="MobiDB-lite"/>
    </source>
</evidence>
<gene>
    <name evidence="1" type="primary">serS</name>
    <name type="ordered locus">Lreu_0097</name>
</gene>
<proteinExistence type="inferred from homology"/>
<protein>
    <recommendedName>
        <fullName evidence="1">Serine--tRNA ligase</fullName>
        <ecNumber evidence="1">6.1.1.11</ecNumber>
    </recommendedName>
    <alternativeName>
        <fullName evidence="1">Seryl-tRNA synthetase</fullName>
        <shortName evidence="1">SerRS</shortName>
    </alternativeName>
    <alternativeName>
        <fullName evidence="1">Seryl-tRNA(Ser/Sec) synthetase</fullName>
    </alternativeName>
</protein>
<keyword id="KW-0030">Aminoacyl-tRNA synthetase</keyword>
<keyword id="KW-0067">ATP-binding</keyword>
<keyword id="KW-0963">Cytoplasm</keyword>
<keyword id="KW-0436">Ligase</keyword>
<keyword id="KW-0547">Nucleotide-binding</keyword>
<keyword id="KW-0648">Protein biosynthesis</keyword>
<keyword id="KW-1185">Reference proteome</keyword>
<accession>A5VHP5</accession>
<name>SYS_LIMRD</name>